<keyword id="KW-0997">Cell inner membrane</keyword>
<keyword id="KW-1003">Cell membrane</keyword>
<keyword id="KW-0472">Membrane</keyword>
<keyword id="KW-0812">Transmembrane</keyword>
<keyword id="KW-1133">Transmembrane helix</keyword>
<feature type="chain" id="PRO_1000149880" description="Universal stress protein B homolog">
    <location>
        <begin position="1"/>
        <end position="107"/>
    </location>
</feature>
<feature type="transmembrane region" description="Helical" evidence="1">
    <location>
        <begin position="6"/>
        <end position="25"/>
    </location>
</feature>
<feature type="transmembrane region" description="Helical" evidence="1">
    <location>
        <begin position="89"/>
        <end position="106"/>
    </location>
</feature>
<gene>
    <name evidence="1" type="primary">uspB</name>
    <name type="ordered locus">VCM66_0079</name>
</gene>
<proteinExistence type="inferred from homology"/>
<dbReference type="EMBL" id="CP001233">
    <property type="protein sequence ID" value="ACP04415.1"/>
    <property type="molecule type" value="Genomic_DNA"/>
</dbReference>
<dbReference type="RefSeq" id="WP_000623073.1">
    <property type="nucleotide sequence ID" value="NC_012578.1"/>
</dbReference>
<dbReference type="GeneID" id="89513162"/>
<dbReference type="KEGG" id="vcm:VCM66_0079"/>
<dbReference type="HOGENOM" id="CLU_151816_0_0_6"/>
<dbReference type="Proteomes" id="UP000001217">
    <property type="component" value="Chromosome I"/>
</dbReference>
<dbReference type="GO" id="GO:0005886">
    <property type="term" value="C:plasma membrane"/>
    <property type="evidence" value="ECO:0007669"/>
    <property type="project" value="UniProtKB-SubCell"/>
</dbReference>
<dbReference type="HAMAP" id="MF_01088">
    <property type="entry name" value="UspB"/>
    <property type="match status" value="1"/>
</dbReference>
<dbReference type="InterPro" id="IPR019598">
    <property type="entry name" value="Universal_stress_protein_B"/>
</dbReference>
<dbReference type="NCBIfam" id="NF003435">
    <property type="entry name" value="PRK04960.1"/>
    <property type="match status" value="1"/>
</dbReference>
<dbReference type="Pfam" id="PF10625">
    <property type="entry name" value="UspB"/>
    <property type="match status" value="1"/>
</dbReference>
<comment type="subcellular location">
    <subcellularLocation>
        <location evidence="1">Cell inner membrane</location>
        <topology evidence="1">Multi-pass membrane protein</topology>
    </subcellularLocation>
</comment>
<comment type="similarity">
    <text evidence="1">Belongs to the universal stress protein B family.</text>
</comment>
<protein>
    <recommendedName>
        <fullName evidence="1">Universal stress protein B homolog</fullName>
    </recommendedName>
</protein>
<reference key="1">
    <citation type="journal article" date="2008" name="PLoS ONE">
        <title>A recalibrated molecular clock and independent origins for the cholera pandemic clones.</title>
        <authorList>
            <person name="Feng L."/>
            <person name="Reeves P.R."/>
            <person name="Lan R."/>
            <person name="Ren Y."/>
            <person name="Gao C."/>
            <person name="Zhou Z."/>
            <person name="Ren Y."/>
            <person name="Cheng J."/>
            <person name="Wang W."/>
            <person name="Wang J."/>
            <person name="Qian W."/>
            <person name="Li D."/>
            <person name="Wang L."/>
        </authorList>
    </citation>
    <scope>NUCLEOTIDE SEQUENCE [LARGE SCALE GENOMIC DNA]</scope>
    <source>
        <strain>M66-2</strain>
    </source>
</reference>
<organism>
    <name type="scientific">Vibrio cholerae serotype O1 (strain M66-2)</name>
    <dbReference type="NCBI Taxonomy" id="579112"/>
    <lineage>
        <taxon>Bacteria</taxon>
        <taxon>Pseudomonadati</taxon>
        <taxon>Pseudomonadota</taxon>
        <taxon>Gammaproteobacteria</taxon>
        <taxon>Vibrionales</taxon>
        <taxon>Vibrionaceae</taxon>
        <taxon>Vibrio</taxon>
    </lineage>
</organism>
<accession>C3LPS1</accession>
<evidence type="ECO:0000255" key="1">
    <source>
        <dbReference type="HAMAP-Rule" id="MF_01088"/>
    </source>
</evidence>
<sequence length="107" mass="12338">MISGDTILFALMLVTAINVARYVTALRSLIYIMREAHPLLYQQVDGRGFFTTHGNVTKQVRLYHYLKSREYHHHHDPVFTGKCDRVRELFILSGSLLVLTTVVAFML</sequence>
<name>USPB_VIBCM</name>